<gene>
    <name evidence="1" type="primary">groES</name>
    <name evidence="1" type="synonym">groS</name>
    <name type="ordered locus">CLM_3733</name>
</gene>
<sequence>MNIRPLGDRVVIKRVEAEETTKSGIVLPGAAKEKPQVAEVIAVGPGGLVDGKEVKMELKVGDKVLFSKYAGNEVKIEGEEVTILKQDDILAVVEG</sequence>
<accession>C1FLV6</accession>
<comment type="function">
    <text evidence="1">Together with the chaperonin GroEL, plays an essential role in assisting protein folding. The GroEL-GroES system forms a nano-cage that allows encapsulation of the non-native substrate proteins and provides a physical environment optimized to promote and accelerate protein folding. GroES binds to the apical surface of the GroEL ring, thereby capping the opening of the GroEL channel.</text>
</comment>
<comment type="subunit">
    <text evidence="1">Heptamer of 7 subunits arranged in a ring. Interacts with the chaperonin GroEL.</text>
</comment>
<comment type="subcellular location">
    <subcellularLocation>
        <location evidence="1">Cytoplasm</location>
    </subcellularLocation>
</comment>
<comment type="similarity">
    <text evidence="1">Belongs to the GroES chaperonin family.</text>
</comment>
<proteinExistence type="inferred from homology"/>
<evidence type="ECO:0000255" key="1">
    <source>
        <dbReference type="HAMAP-Rule" id="MF_00580"/>
    </source>
</evidence>
<name>CH10_CLOBJ</name>
<dbReference type="EMBL" id="CP001581">
    <property type="protein sequence ID" value="ACO85916.1"/>
    <property type="molecule type" value="Genomic_DNA"/>
</dbReference>
<dbReference type="RefSeq" id="WP_003357350.1">
    <property type="nucleotide sequence ID" value="NC_012563.1"/>
</dbReference>
<dbReference type="SMR" id="C1FLV6"/>
<dbReference type="KEGG" id="cby:CLM_3733"/>
<dbReference type="eggNOG" id="COG0234">
    <property type="taxonomic scope" value="Bacteria"/>
</dbReference>
<dbReference type="HOGENOM" id="CLU_132825_2_0_9"/>
<dbReference type="Proteomes" id="UP000001374">
    <property type="component" value="Chromosome"/>
</dbReference>
<dbReference type="GO" id="GO:0005737">
    <property type="term" value="C:cytoplasm"/>
    <property type="evidence" value="ECO:0007669"/>
    <property type="project" value="UniProtKB-SubCell"/>
</dbReference>
<dbReference type="GO" id="GO:0005524">
    <property type="term" value="F:ATP binding"/>
    <property type="evidence" value="ECO:0007669"/>
    <property type="project" value="InterPro"/>
</dbReference>
<dbReference type="GO" id="GO:0046872">
    <property type="term" value="F:metal ion binding"/>
    <property type="evidence" value="ECO:0007669"/>
    <property type="project" value="TreeGrafter"/>
</dbReference>
<dbReference type="GO" id="GO:0044183">
    <property type="term" value="F:protein folding chaperone"/>
    <property type="evidence" value="ECO:0007669"/>
    <property type="project" value="InterPro"/>
</dbReference>
<dbReference type="GO" id="GO:0051087">
    <property type="term" value="F:protein-folding chaperone binding"/>
    <property type="evidence" value="ECO:0007669"/>
    <property type="project" value="TreeGrafter"/>
</dbReference>
<dbReference type="GO" id="GO:0051082">
    <property type="term" value="F:unfolded protein binding"/>
    <property type="evidence" value="ECO:0007669"/>
    <property type="project" value="TreeGrafter"/>
</dbReference>
<dbReference type="GO" id="GO:0051085">
    <property type="term" value="P:chaperone cofactor-dependent protein refolding"/>
    <property type="evidence" value="ECO:0007669"/>
    <property type="project" value="TreeGrafter"/>
</dbReference>
<dbReference type="CDD" id="cd00320">
    <property type="entry name" value="cpn10"/>
    <property type="match status" value="1"/>
</dbReference>
<dbReference type="FunFam" id="2.30.33.40:FF:000001">
    <property type="entry name" value="10 kDa chaperonin"/>
    <property type="match status" value="1"/>
</dbReference>
<dbReference type="Gene3D" id="2.30.33.40">
    <property type="entry name" value="GroES chaperonin"/>
    <property type="match status" value="1"/>
</dbReference>
<dbReference type="HAMAP" id="MF_00580">
    <property type="entry name" value="CH10"/>
    <property type="match status" value="1"/>
</dbReference>
<dbReference type="InterPro" id="IPR020818">
    <property type="entry name" value="Chaperonin_GroES"/>
</dbReference>
<dbReference type="InterPro" id="IPR037124">
    <property type="entry name" value="Chaperonin_GroES_sf"/>
</dbReference>
<dbReference type="InterPro" id="IPR018369">
    <property type="entry name" value="Chaprnonin_Cpn10_CS"/>
</dbReference>
<dbReference type="InterPro" id="IPR011032">
    <property type="entry name" value="GroES-like_sf"/>
</dbReference>
<dbReference type="NCBIfam" id="NF001527">
    <property type="entry name" value="PRK00364.1-2"/>
    <property type="match status" value="1"/>
</dbReference>
<dbReference type="NCBIfam" id="NF001531">
    <property type="entry name" value="PRK00364.2-2"/>
    <property type="match status" value="1"/>
</dbReference>
<dbReference type="NCBIfam" id="NF001533">
    <property type="entry name" value="PRK00364.2-4"/>
    <property type="match status" value="1"/>
</dbReference>
<dbReference type="PANTHER" id="PTHR10772">
    <property type="entry name" value="10 KDA HEAT SHOCK PROTEIN"/>
    <property type="match status" value="1"/>
</dbReference>
<dbReference type="PANTHER" id="PTHR10772:SF58">
    <property type="entry name" value="CO-CHAPERONIN GROES"/>
    <property type="match status" value="1"/>
</dbReference>
<dbReference type="Pfam" id="PF00166">
    <property type="entry name" value="Cpn10"/>
    <property type="match status" value="1"/>
</dbReference>
<dbReference type="PRINTS" id="PR00297">
    <property type="entry name" value="CHAPERONIN10"/>
</dbReference>
<dbReference type="SMART" id="SM00883">
    <property type="entry name" value="Cpn10"/>
    <property type="match status" value="1"/>
</dbReference>
<dbReference type="SUPFAM" id="SSF50129">
    <property type="entry name" value="GroES-like"/>
    <property type="match status" value="1"/>
</dbReference>
<dbReference type="PROSITE" id="PS00681">
    <property type="entry name" value="CHAPERONINS_CPN10"/>
    <property type="match status" value="1"/>
</dbReference>
<reference key="1">
    <citation type="submission" date="2008-10" db="EMBL/GenBank/DDBJ databases">
        <title>Genome sequence of Clostridium botulinum A2 Kyoto.</title>
        <authorList>
            <person name="Shrivastava S."/>
            <person name="Brinkac L.M."/>
            <person name="Brown J.L."/>
            <person name="Bruce D."/>
            <person name="Detter C.C."/>
            <person name="Johnson E.A."/>
            <person name="Munk C.A."/>
            <person name="Smith L.A."/>
            <person name="Smith T.J."/>
            <person name="Sutton G."/>
            <person name="Brettin T.S."/>
        </authorList>
    </citation>
    <scope>NUCLEOTIDE SEQUENCE [LARGE SCALE GENOMIC DNA]</scope>
    <source>
        <strain>Kyoto / Type A2</strain>
    </source>
</reference>
<organism>
    <name type="scientific">Clostridium botulinum (strain Kyoto / Type A2)</name>
    <dbReference type="NCBI Taxonomy" id="536232"/>
    <lineage>
        <taxon>Bacteria</taxon>
        <taxon>Bacillati</taxon>
        <taxon>Bacillota</taxon>
        <taxon>Clostridia</taxon>
        <taxon>Eubacteriales</taxon>
        <taxon>Clostridiaceae</taxon>
        <taxon>Clostridium</taxon>
    </lineage>
</organism>
<feature type="chain" id="PRO_1000146895" description="Co-chaperonin GroES">
    <location>
        <begin position="1"/>
        <end position="95"/>
    </location>
</feature>
<protein>
    <recommendedName>
        <fullName evidence="1">Co-chaperonin GroES</fullName>
    </recommendedName>
    <alternativeName>
        <fullName evidence="1">10 kDa chaperonin</fullName>
    </alternativeName>
    <alternativeName>
        <fullName evidence="1">Chaperonin-10</fullName>
        <shortName evidence="1">Cpn10</shortName>
    </alternativeName>
</protein>
<keyword id="KW-0143">Chaperone</keyword>
<keyword id="KW-0963">Cytoplasm</keyword>